<name>YBAB_SALEP</name>
<evidence type="ECO:0000255" key="1">
    <source>
        <dbReference type="HAMAP-Rule" id="MF_00274"/>
    </source>
</evidence>
<feature type="chain" id="PRO_1000114642" description="Nucleoid-associated protein YbaB">
    <location>
        <begin position="1"/>
        <end position="109"/>
    </location>
</feature>
<organism>
    <name type="scientific">Salmonella enteritidis PT4 (strain P125109)</name>
    <dbReference type="NCBI Taxonomy" id="550537"/>
    <lineage>
        <taxon>Bacteria</taxon>
        <taxon>Pseudomonadati</taxon>
        <taxon>Pseudomonadota</taxon>
        <taxon>Gammaproteobacteria</taxon>
        <taxon>Enterobacterales</taxon>
        <taxon>Enterobacteriaceae</taxon>
        <taxon>Salmonella</taxon>
    </lineage>
</organism>
<comment type="function">
    <text evidence="1">Binds to DNA and alters its conformation. May be involved in regulation of gene expression, nucleoid organization and DNA protection.</text>
</comment>
<comment type="subunit">
    <text evidence="1">Homodimer.</text>
</comment>
<comment type="subcellular location">
    <subcellularLocation>
        <location evidence="1">Cytoplasm</location>
        <location evidence="1">Nucleoid</location>
    </subcellularLocation>
</comment>
<comment type="similarity">
    <text evidence="1">Belongs to the YbaB/EbfC family.</text>
</comment>
<protein>
    <recommendedName>
        <fullName evidence="1">Nucleoid-associated protein YbaB</fullName>
    </recommendedName>
</protein>
<dbReference type="EMBL" id="AM933172">
    <property type="protein sequence ID" value="CAR32052.1"/>
    <property type="molecule type" value="Genomic_DNA"/>
</dbReference>
<dbReference type="RefSeq" id="WP_000467098.1">
    <property type="nucleotide sequence ID" value="NC_011294.1"/>
</dbReference>
<dbReference type="SMR" id="B5QU74"/>
<dbReference type="KEGG" id="set:SEN0466"/>
<dbReference type="HOGENOM" id="CLU_140930_0_0_6"/>
<dbReference type="Proteomes" id="UP000000613">
    <property type="component" value="Chromosome"/>
</dbReference>
<dbReference type="GO" id="GO:0043590">
    <property type="term" value="C:bacterial nucleoid"/>
    <property type="evidence" value="ECO:0007669"/>
    <property type="project" value="UniProtKB-UniRule"/>
</dbReference>
<dbReference type="GO" id="GO:0005829">
    <property type="term" value="C:cytosol"/>
    <property type="evidence" value="ECO:0007669"/>
    <property type="project" value="TreeGrafter"/>
</dbReference>
<dbReference type="GO" id="GO:0003677">
    <property type="term" value="F:DNA binding"/>
    <property type="evidence" value="ECO:0007669"/>
    <property type="project" value="UniProtKB-UniRule"/>
</dbReference>
<dbReference type="FunFam" id="3.30.1310.10:FF:000001">
    <property type="entry name" value="Nucleoid-associated protein YbaB"/>
    <property type="match status" value="1"/>
</dbReference>
<dbReference type="Gene3D" id="3.30.1310.10">
    <property type="entry name" value="Nucleoid-associated protein YbaB-like domain"/>
    <property type="match status" value="1"/>
</dbReference>
<dbReference type="HAMAP" id="MF_00274">
    <property type="entry name" value="DNA_YbaB_EbfC"/>
    <property type="match status" value="1"/>
</dbReference>
<dbReference type="InterPro" id="IPR036894">
    <property type="entry name" value="YbaB-like_sf"/>
</dbReference>
<dbReference type="InterPro" id="IPR004401">
    <property type="entry name" value="YbaB/EbfC"/>
</dbReference>
<dbReference type="NCBIfam" id="TIGR00103">
    <property type="entry name" value="DNA_YbaB_EbfC"/>
    <property type="match status" value="1"/>
</dbReference>
<dbReference type="PANTHER" id="PTHR33449">
    <property type="entry name" value="NUCLEOID-ASSOCIATED PROTEIN YBAB"/>
    <property type="match status" value="1"/>
</dbReference>
<dbReference type="PANTHER" id="PTHR33449:SF1">
    <property type="entry name" value="NUCLEOID-ASSOCIATED PROTEIN YBAB"/>
    <property type="match status" value="1"/>
</dbReference>
<dbReference type="Pfam" id="PF02575">
    <property type="entry name" value="YbaB_DNA_bd"/>
    <property type="match status" value="1"/>
</dbReference>
<dbReference type="PIRSF" id="PIRSF004555">
    <property type="entry name" value="UCP004555"/>
    <property type="match status" value="1"/>
</dbReference>
<dbReference type="SUPFAM" id="SSF82607">
    <property type="entry name" value="YbaB-like"/>
    <property type="match status" value="1"/>
</dbReference>
<proteinExistence type="inferred from homology"/>
<sequence length="109" mass="12015">MFGKGGLGNLMKQAQQMQEKMQKMQEEIAQLEVTGESGAGLVKVTINGAHNCRRVEIDPSLLEDDKEMLEDLVAAAFNDAARRIEETQKEKMASVSSGMQLPPGFKMPF</sequence>
<accession>B5QU74</accession>
<gene>
    <name evidence="1" type="primary">ybaB</name>
    <name type="ordered locus">SEN0466</name>
</gene>
<keyword id="KW-0963">Cytoplasm</keyword>
<keyword id="KW-0238">DNA-binding</keyword>
<reference key="1">
    <citation type="journal article" date="2008" name="Genome Res.">
        <title>Comparative genome analysis of Salmonella enteritidis PT4 and Salmonella gallinarum 287/91 provides insights into evolutionary and host adaptation pathways.</title>
        <authorList>
            <person name="Thomson N.R."/>
            <person name="Clayton D.J."/>
            <person name="Windhorst D."/>
            <person name="Vernikos G."/>
            <person name="Davidson S."/>
            <person name="Churcher C."/>
            <person name="Quail M.A."/>
            <person name="Stevens M."/>
            <person name="Jones M.A."/>
            <person name="Watson M."/>
            <person name="Barron A."/>
            <person name="Layton A."/>
            <person name="Pickard D."/>
            <person name="Kingsley R.A."/>
            <person name="Bignell A."/>
            <person name="Clark L."/>
            <person name="Harris B."/>
            <person name="Ormond D."/>
            <person name="Abdellah Z."/>
            <person name="Brooks K."/>
            <person name="Cherevach I."/>
            <person name="Chillingworth T."/>
            <person name="Woodward J."/>
            <person name="Norberczak H."/>
            <person name="Lord A."/>
            <person name="Arrowsmith C."/>
            <person name="Jagels K."/>
            <person name="Moule S."/>
            <person name="Mungall K."/>
            <person name="Saunders M."/>
            <person name="Whitehead S."/>
            <person name="Chabalgoity J.A."/>
            <person name="Maskell D."/>
            <person name="Humphreys T."/>
            <person name="Roberts M."/>
            <person name="Barrow P.A."/>
            <person name="Dougan G."/>
            <person name="Parkhill J."/>
        </authorList>
    </citation>
    <scope>NUCLEOTIDE SEQUENCE [LARGE SCALE GENOMIC DNA]</scope>
    <source>
        <strain>P125109</strain>
    </source>
</reference>